<dbReference type="EMBL" id="BC088034">
    <property type="protein sequence ID" value="AAH88034.1"/>
    <property type="molecule type" value="mRNA"/>
</dbReference>
<dbReference type="RefSeq" id="NP_001011310.1">
    <property type="nucleotide sequence ID" value="NM_001011310.1"/>
</dbReference>
<dbReference type="RefSeq" id="XP_031755913.1">
    <property type="nucleotide sequence ID" value="XM_031900053.1"/>
</dbReference>
<dbReference type="SMR" id="Q5M8G4"/>
<dbReference type="FunCoup" id="Q5M8G4">
    <property type="interactions" value="1269"/>
</dbReference>
<dbReference type="STRING" id="8364.ENSXETP00000050945"/>
<dbReference type="PaxDb" id="8364-ENSXETP00000027052"/>
<dbReference type="GeneID" id="496765"/>
<dbReference type="KEGG" id="xtr:496765"/>
<dbReference type="AGR" id="Xenbase:XB-GENE-968689"/>
<dbReference type="CTD" id="55631"/>
<dbReference type="Xenbase" id="XB-GENE-968689">
    <property type="gene designation" value="lrrc40"/>
</dbReference>
<dbReference type="eggNOG" id="KOG0472">
    <property type="taxonomic scope" value="Eukaryota"/>
</dbReference>
<dbReference type="HOGENOM" id="CLU_000288_18_23_1"/>
<dbReference type="InParanoid" id="Q5M8G4"/>
<dbReference type="OMA" id="CMLHKLT"/>
<dbReference type="OrthoDB" id="660555at2759"/>
<dbReference type="PhylomeDB" id="Q5M8G4"/>
<dbReference type="TreeFam" id="TF354310"/>
<dbReference type="Proteomes" id="UP000008143">
    <property type="component" value="Chromosome 4"/>
</dbReference>
<dbReference type="FunFam" id="3.80.10.10:FF:000116">
    <property type="entry name" value="Leucine-rich repeat-containing protein 40"/>
    <property type="match status" value="1"/>
</dbReference>
<dbReference type="FunFam" id="3.80.10.10:FF:000193">
    <property type="entry name" value="Leucine-rich repeat-containing protein 40"/>
    <property type="match status" value="1"/>
</dbReference>
<dbReference type="FunFam" id="3.80.10.10:FF:000265">
    <property type="entry name" value="Leucine-rich repeat-containing protein 40"/>
    <property type="match status" value="1"/>
</dbReference>
<dbReference type="FunFam" id="3.80.10.10:FF:000206">
    <property type="entry name" value="leucine-rich repeat-containing protein 40"/>
    <property type="match status" value="1"/>
</dbReference>
<dbReference type="Gene3D" id="3.80.10.10">
    <property type="entry name" value="Ribonuclease Inhibitor"/>
    <property type="match status" value="4"/>
</dbReference>
<dbReference type="InterPro" id="IPR001611">
    <property type="entry name" value="Leu-rich_rpt"/>
</dbReference>
<dbReference type="InterPro" id="IPR003591">
    <property type="entry name" value="Leu-rich_rpt_typical-subtyp"/>
</dbReference>
<dbReference type="InterPro" id="IPR032675">
    <property type="entry name" value="LRR_dom_sf"/>
</dbReference>
<dbReference type="InterPro" id="IPR050216">
    <property type="entry name" value="LRR_domain-containing"/>
</dbReference>
<dbReference type="PANTHER" id="PTHR48051">
    <property type="match status" value="1"/>
</dbReference>
<dbReference type="PANTHER" id="PTHR48051:SF1">
    <property type="entry name" value="RAS SUPPRESSOR PROTEIN 1"/>
    <property type="match status" value="1"/>
</dbReference>
<dbReference type="Pfam" id="PF13855">
    <property type="entry name" value="LRR_8"/>
    <property type="match status" value="4"/>
</dbReference>
<dbReference type="SMART" id="SM00364">
    <property type="entry name" value="LRR_BAC"/>
    <property type="match status" value="11"/>
</dbReference>
<dbReference type="SMART" id="SM00365">
    <property type="entry name" value="LRR_SD22"/>
    <property type="match status" value="6"/>
</dbReference>
<dbReference type="SMART" id="SM00369">
    <property type="entry name" value="LRR_TYP"/>
    <property type="match status" value="13"/>
</dbReference>
<dbReference type="SUPFAM" id="SSF52058">
    <property type="entry name" value="L domain-like"/>
    <property type="match status" value="2"/>
</dbReference>
<dbReference type="PROSITE" id="PS51450">
    <property type="entry name" value="LRR"/>
    <property type="match status" value="17"/>
</dbReference>
<feature type="chain" id="PRO_0000226263" description="Leucine-rich repeat-containing protein 40">
    <location>
        <begin position="1"/>
        <end position="605"/>
    </location>
</feature>
<feature type="repeat" description="LRR 1">
    <location>
        <begin position="83"/>
        <end position="104"/>
    </location>
</feature>
<feature type="repeat" description="LRR 2">
    <location>
        <begin position="106"/>
        <end position="127"/>
    </location>
</feature>
<feature type="repeat" description="LRR 3">
    <location>
        <begin position="129"/>
        <end position="151"/>
    </location>
</feature>
<feature type="repeat" description="LRR 4">
    <location>
        <begin position="152"/>
        <end position="173"/>
    </location>
</feature>
<feature type="repeat" description="LRR 5">
    <location>
        <begin position="175"/>
        <end position="196"/>
    </location>
</feature>
<feature type="repeat" description="LRR 6">
    <location>
        <begin position="198"/>
        <end position="219"/>
    </location>
</feature>
<feature type="repeat" description="LRR 7">
    <location>
        <begin position="221"/>
        <end position="242"/>
    </location>
</feature>
<feature type="repeat" description="LRR 8">
    <location>
        <begin position="244"/>
        <end position="265"/>
    </location>
</feature>
<feature type="repeat" description="LRR 9">
    <location>
        <begin position="266"/>
        <end position="287"/>
    </location>
</feature>
<feature type="repeat" description="LRR 10">
    <location>
        <begin position="290"/>
        <end position="311"/>
    </location>
</feature>
<feature type="repeat" description="LRR 11">
    <location>
        <begin position="313"/>
        <end position="335"/>
    </location>
</feature>
<feature type="repeat" description="LRR 12">
    <location>
        <begin position="336"/>
        <end position="357"/>
    </location>
</feature>
<feature type="repeat" description="LRR 13">
    <location>
        <begin position="429"/>
        <end position="450"/>
    </location>
</feature>
<feature type="repeat" description="LRR 14">
    <location>
        <begin position="453"/>
        <end position="475"/>
    </location>
</feature>
<feature type="repeat" description="LRR 15">
    <location>
        <begin position="476"/>
        <end position="497"/>
    </location>
</feature>
<feature type="repeat" description="LRR 16">
    <location>
        <begin position="499"/>
        <end position="520"/>
    </location>
</feature>
<feature type="repeat" description="LRR 17">
    <location>
        <begin position="522"/>
        <end position="543"/>
    </location>
</feature>
<feature type="repeat" description="LRR 18">
    <location>
        <begin position="546"/>
        <end position="567"/>
    </location>
</feature>
<feature type="repeat" description="LRR 19">
    <location>
        <begin position="569"/>
        <end position="590"/>
    </location>
</feature>
<feature type="region of interest" description="Disordered" evidence="1">
    <location>
        <begin position="1"/>
        <end position="26"/>
    </location>
</feature>
<organism>
    <name type="scientific">Xenopus tropicalis</name>
    <name type="common">Western clawed frog</name>
    <name type="synonym">Silurana tropicalis</name>
    <dbReference type="NCBI Taxonomy" id="8364"/>
    <lineage>
        <taxon>Eukaryota</taxon>
        <taxon>Metazoa</taxon>
        <taxon>Chordata</taxon>
        <taxon>Craniata</taxon>
        <taxon>Vertebrata</taxon>
        <taxon>Euteleostomi</taxon>
        <taxon>Amphibia</taxon>
        <taxon>Batrachia</taxon>
        <taxon>Anura</taxon>
        <taxon>Pipoidea</taxon>
        <taxon>Pipidae</taxon>
        <taxon>Xenopodinae</taxon>
        <taxon>Xenopus</taxon>
        <taxon>Silurana</taxon>
    </lineage>
</organism>
<proteinExistence type="evidence at transcript level"/>
<name>LRC40_XENTR</name>
<protein>
    <recommendedName>
        <fullName>Leucine-rich repeat-containing protein 40</fullName>
    </recommendedName>
</protein>
<sequence length="605" mass="67188">MSRFRRGGKAPDPLSGFRAPKEQEPAVPHGLIKAARKSGQLNLSARGLTDVPVSVWRINVDTPPEAHQNVDFGGSDRWWEQTDLTKLILASNKLQLLSEDISLLPALVVLDIHDNQIVSLPCAIKELTNLQKLNISHNKIKQLPKELQHLQNLKSLLLQHNQLEELPDSIGHLSILEELDVSNNCLRSISSSVGQLTGLVKFNLSSNKLTALPTEIGKMKNLKQLDCTSNLLENVPASVAGMESLEQLYLRQNKLTYLPELPFLTKLKELHVGNNQIQTLGPEHLQNLSSLSVLELRYNKLKVLPEEISLLNGLERLDLSNNDLGSLPCTLGSLPNLKSLQLEGNPLRGIRRDILNKGTQELLKYLKGRVQVPDVKTQEDENSTATAMTLPSESVVNTHAIVTLKTLEYCEKQASLIPEAVFNATGSSFITTVNFSKNQLTEVPARIVEMKDSVCDVNLGFNKISSISLNLCMLLKLTHIDMRNNVLTSLPSEMEAMTRLQSVILSFNRFKHFPDVLYRIPTLETILISSNQIGSIDPTQLIKMTKLSTLDLQNNDLLQIPPALGNCESLRALHLEGNPFRNPRAAILAKGTVAVLEYLRSRIPT</sequence>
<gene>
    <name type="primary">lrrc40</name>
</gene>
<reference key="1">
    <citation type="submission" date="2004-12" db="EMBL/GenBank/DDBJ databases">
        <authorList>
            <consortium name="NIH - Xenopus Gene Collection (XGC) project"/>
        </authorList>
    </citation>
    <scope>NUCLEOTIDE SEQUENCE [LARGE SCALE MRNA]</scope>
</reference>
<evidence type="ECO:0000256" key="1">
    <source>
        <dbReference type="SAM" id="MobiDB-lite"/>
    </source>
</evidence>
<keyword id="KW-0433">Leucine-rich repeat</keyword>
<keyword id="KW-1185">Reference proteome</keyword>
<keyword id="KW-0677">Repeat</keyword>
<accession>Q5M8G4</accession>